<feature type="chain" id="PRO_0000323566" description="60S ribosomal export protein NMD3">
    <location>
        <begin position="1"/>
        <end position="504"/>
    </location>
</feature>
<feature type="sequence conflict" description="In Ref. 1; CAJ82727." evidence="2" ref="1">
    <original>A</original>
    <variation>V</variation>
    <location>
        <position position="381"/>
    </location>
</feature>
<feature type="sequence conflict" description="In Ref. 1; CAJ82727." evidence="2" ref="1">
    <original>L</original>
    <variation>Q</variation>
    <location>
        <position position="491"/>
    </location>
</feature>
<gene>
    <name type="primary">nmd3</name>
    <name type="synonym">nmd3l</name>
    <name type="ORF">TNeu059f02.1</name>
</gene>
<organism>
    <name type="scientific">Xenopus tropicalis</name>
    <name type="common">Western clawed frog</name>
    <name type="synonym">Silurana tropicalis</name>
    <dbReference type="NCBI Taxonomy" id="8364"/>
    <lineage>
        <taxon>Eukaryota</taxon>
        <taxon>Metazoa</taxon>
        <taxon>Chordata</taxon>
        <taxon>Craniata</taxon>
        <taxon>Vertebrata</taxon>
        <taxon>Euteleostomi</taxon>
        <taxon>Amphibia</taxon>
        <taxon>Batrachia</taxon>
        <taxon>Anura</taxon>
        <taxon>Pipoidea</taxon>
        <taxon>Pipidae</taxon>
        <taxon>Xenopodinae</taxon>
        <taxon>Xenopus</taxon>
        <taxon>Silurana</taxon>
    </lineage>
</organism>
<keyword id="KW-0963">Cytoplasm</keyword>
<keyword id="KW-0539">Nucleus</keyword>
<keyword id="KW-0653">Protein transport</keyword>
<keyword id="KW-1185">Reference proteome</keyword>
<keyword id="KW-0813">Transport</keyword>
<proteinExistence type="evidence at transcript level"/>
<evidence type="ECO:0000250" key="1">
    <source>
        <dbReference type="UniProtKB" id="Q96D46"/>
    </source>
</evidence>
<evidence type="ECO:0000305" key="2"/>
<sequence>MEYMKGPATSSQGNILCCQCGIPIPPNPANMCVSCLRMQVDISEGIPKQVSVHFCKQCERYLQPPGTWIQCALESRELLTLCLKKLKANLSKVRLIDAGFIWTEPHSKRLKVKLTIQKEVMNGAILQQVFVVDYIVQSQMCDDCHRVEAKDFWKAVVQVRQKVLHKKTFYYLEQTILKHRLHQNTLRVKEIHDGLDFYYASKQHAQKMVEFLQCTVPCRFKASQRLISHDIHTNAYNYKSTFSVEIVPVCKDNLVCLSPKLAQSLGNMNQICICVRVTSTIHLIDPSTLQIAEVDGNTYWRSPFNSLFHPKQLEEFIVMDTDIVRDRKQAAGAGMRSNKHILAEVWVQKTSEMNTTQQYHCRTHLGHLLNPGDLVLGFDLANCNLNDEFINKMNPHHIPDVVLIKKSYDRTKRQRRRNWKLKEIERDREGMDTDDERQYQDFLEDLEEDEVIRKNVNIYKNANLPVESDTDEEGAPRISLAEMLEDLHISLDATGGEGAEMLTE</sequence>
<protein>
    <recommendedName>
        <fullName>60S ribosomal export protein NMD3</fullName>
    </recommendedName>
</protein>
<reference key="1">
    <citation type="submission" date="2006-10" db="EMBL/GenBank/DDBJ databases">
        <authorList>
            <consortium name="Sanger Xenopus tropicalis EST/cDNA project"/>
        </authorList>
    </citation>
    <scope>NUCLEOTIDE SEQUENCE [LARGE SCALE MRNA]</scope>
    <source>
        <tissue>Neurula</tissue>
    </source>
</reference>
<reference key="2">
    <citation type="submission" date="2003-12" db="EMBL/GenBank/DDBJ databases">
        <authorList>
            <consortium name="NIH - Xenopus Gene Collection (XGC) project"/>
        </authorList>
    </citation>
    <scope>NUCLEOTIDE SEQUENCE [LARGE SCALE MRNA]</scope>
    <source>
        <tissue>Embryo</tissue>
    </source>
</reference>
<comment type="function">
    <text evidence="1">Acts as an adapter for the XPO1/CRM1-mediated export of the 60S ribosomal subunit.</text>
</comment>
<comment type="subunit">
    <text evidence="1">Associates with pre-60S ribosomal particles.</text>
</comment>
<comment type="subcellular location">
    <subcellularLocation>
        <location evidence="1">Cytoplasm</location>
    </subcellularLocation>
    <subcellularLocation>
        <location evidence="1">Nucleus</location>
    </subcellularLocation>
    <text evidence="1">Shuttles between the nucleus/nucleolus and the cytoplasm in a XPO1/CRM1-dependent manner.</text>
</comment>
<comment type="similarity">
    <text evidence="2">Belongs to the NMD3 family.</text>
</comment>
<name>NMD3_XENTR</name>
<accession>Q6P2Z6</accession>
<accession>Q28FK1</accession>
<dbReference type="EMBL" id="CR761933">
    <property type="protein sequence ID" value="CAJ82727.1"/>
    <property type="molecule type" value="mRNA"/>
</dbReference>
<dbReference type="EMBL" id="BC064238">
    <property type="protein sequence ID" value="AAH64238.1"/>
    <property type="molecule type" value="mRNA"/>
</dbReference>
<dbReference type="EMBL" id="BC081303">
    <property type="protein sequence ID" value="AAH81303.1"/>
    <property type="molecule type" value="mRNA"/>
</dbReference>
<dbReference type="RefSeq" id="NP_989367.2">
    <property type="nucleotide sequence ID" value="NM_204036.2"/>
</dbReference>
<dbReference type="SMR" id="Q6P2Z6"/>
<dbReference type="FunCoup" id="Q6P2Z6">
    <property type="interactions" value="3230"/>
</dbReference>
<dbReference type="STRING" id="8364.ENSXETP00000036592"/>
<dbReference type="PaxDb" id="8364-ENSXETP00000057710"/>
<dbReference type="DNASU" id="394998"/>
<dbReference type="GeneID" id="394998"/>
<dbReference type="KEGG" id="xtr:394998"/>
<dbReference type="AGR" id="Xenbase:XB-GENE-942228"/>
<dbReference type="CTD" id="51068"/>
<dbReference type="Xenbase" id="XB-GENE-942228">
    <property type="gene designation" value="nmd3"/>
</dbReference>
<dbReference type="eggNOG" id="KOG2613">
    <property type="taxonomic scope" value="Eukaryota"/>
</dbReference>
<dbReference type="InParanoid" id="Q6P2Z6"/>
<dbReference type="OrthoDB" id="203821at2759"/>
<dbReference type="Proteomes" id="UP000008143">
    <property type="component" value="Chromosome 5"/>
</dbReference>
<dbReference type="GO" id="GO:0005737">
    <property type="term" value="C:cytoplasm"/>
    <property type="evidence" value="ECO:0007669"/>
    <property type="project" value="UniProtKB-SubCell"/>
</dbReference>
<dbReference type="GO" id="GO:0005634">
    <property type="term" value="C:nucleus"/>
    <property type="evidence" value="ECO:0007669"/>
    <property type="project" value="UniProtKB-SubCell"/>
</dbReference>
<dbReference type="GO" id="GO:0043023">
    <property type="term" value="F:ribosomal large subunit binding"/>
    <property type="evidence" value="ECO:0007669"/>
    <property type="project" value="InterPro"/>
</dbReference>
<dbReference type="GO" id="GO:0015031">
    <property type="term" value="P:protein transport"/>
    <property type="evidence" value="ECO:0007669"/>
    <property type="project" value="UniProtKB-KW"/>
</dbReference>
<dbReference type="InterPro" id="IPR039768">
    <property type="entry name" value="Nmd3"/>
</dbReference>
<dbReference type="InterPro" id="IPR007064">
    <property type="entry name" value="Nmd3_N"/>
</dbReference>
<dbReference type="InterPro" id="IPR048898">
    <property type="entry name" value="NMD3_OB"/>
</dbReference>
<dbReference type="InterPro" id="IPR048899">
    <property type="entry name" value="NMD_SH3"/>
</dbReference>
<dbReference type="PANTHER" id="PTHR12746:SF2">
    <property type="entry name" value="60S RIBOSOMAL EXPORT PROTEIN NMD3"/>
    <property type="match status" value="1"/>
</dbReference>
<dbReference type="PANTHER" id="PTHR12746">
    <property type="entry name" value="NONSENSE-MEDIATED MRNA DECAY PROTEIN 3"/>
    <property type="match status" value="1"/>
</dbReference>
<dbReference type="Pfam" id="PF04981">
    <property type="entry name" value="NMD3"/>
    <property type="match status" value="1"/>
</dbReference>
<dbReference type="Pfam" id="PF21192">
    <property type="entry name" value="NMD3_OB"/>
    <property type="match status" value="1"/>
</dbReference>
<dbReference type="Pfam" id="PF21193">
    <property type="entry name" value="NMD_SH3"/>
    <property type="match status" value="1"/>
</dbReference>